<evidence type="ECO:0000250" key="1"/>
<evidence type="ECO:0000255" key="2">
    <source>
        <dbReference type="PROSITE-ProRule" id="PRU00257"/>
    </source>
</evidence>
<evidence type="ECO:0000256" key="3">
    <source>
        <dbReference type="SAM" id="MobiDB-lite"/>
    </source>
</evidence>
<keyword id="KW-0010">Activator</keyword>
<keyword id="KW-0238">DNA-binding</keyword>
<keyword id="KW-0539">Nucleus</keyword>
<keyword id="KW-1185">Reference proteome</keyword>
<keyword id="KW-0804">Transcription</keyword>
<keyword id="KW-0805">Transcription regulation</keyword>
<dbReference type="EMBL" id="BC059541">
    <property type="protein sequence ID" value="AAH59541.1"/>
    <property type="molecule type" value="mRNA"/>
</dbReference>
<dbReference type="EMBL" id="BC071480">
    <property type="protein sequence ID" value="AAH71480.1"/>
    <property type="molecule type" value="mRNA"/>
</dbReference>
<dbReference type="RefSeq" id="NP_957039.1">
    <property type="nucleotide sequence ID" value="NM_200745.1"/>
</dbReference>
<dbReference type="SMR" id="Q6PBY3"/>
<dbReference type="FunCoup" id="Q6PBY3">
    <property type="interactions" value="2138"/>
</dbReference>
<dbReference type="STRING" id="7955.ENSDARP00000026769"/>
<dbReference type="PaxDb" id="7955-ENSDARP00000026769"/>
<dbReference type="Ensembl" id="ENSDART00000015940">
    <property type="protein sequence ID" value="ENSDARP00000026769"/>
    <property type="gene ID" value="ENSDARG00000009950"/>
</dbReference>
<dbReference type="GeneID" id="793036"/>
<dbReference type="KEGG" id="dre:793036"/>
<dbReference type="AGR" id="ZFIN:ZDB-GENE-040426-1710"/>
<dbReference type="CTD" id="8721"/>
<dbReference type="ZFIN" id="ZDB-GENE-040426-1710">
    <property type="gene designation" value="edf1"/>
</dbReference>
<dbReference type="eggNOG" id="KOG3398">
    <property type="taxonomic scope" value="Eukaryota"/>
</dbReference>
<dbReference type="HOGENOM" id="CLU_112609_0_1_1"/>
<dbReference type="InParanoid" id="Q6PBY3"/>
<dbReference type="OMA" id="KANQQRS"/>
<dbReference type="OrthoDB" id="10253401at2759"/>
<dbReference type="PhylomeDB" id="Q6PBY3"/>
<dbReference type="TreeFam" id="TF300064"/>
<dbReference type="PRO" id="PR:Q6PBY3"/>
<dbReference type="Proteomes" id="UP000000437">
    <property type="component" value="Chromosome 5"/>
</dbReference>
<dbReference type="Bgee" id="ENSDARG00000009950">
    <property type="expression patterns" value="Expressed in early embryo and 26 other cell types or tissues"/>
</dbReference>
<dbReference type="ExpressionAtlas" id="Q6PBY3">
    <property type="expression patterns" value="baseline and differential"/>
</dbReference>
<dbReference type="GO" id="GO:0005634">
    <property type="term" value="C:nucleus"/>
    <property type="evidence" value="ECO:0000318"/>
    <property type="project" value="GO_Central"/>
</dbReference>
<dbReference type="GO" id="GO:0003677">
    <property type="term" value="F:DNA binding"/>
    <property type="evidence" value="ECO:0007669"/>
    <property type="project" value="UniProtKB-KW"/>
</dbReference>
<dbReference type="CDD" id="cd00093">
    <property type="entry name" value="HTH_XRE"/>
    <property type="match status" value="1"/>
</dbReference>
<dbReference type="FunFam" id="1.10.260.40:FF:000015">
    <property type="entry name" value="Endothelial differentiation-related factor 1"/>
    <property type="match status" value="1"/>
</dbReference>
<dbReference type="Gene3D" id="1.10.260.40">
    <property type="entry name" value="lambda repressor-like DNA-binding domains"/>
    <property type="match status" value="1"/>
</dbReference>
<dbReference type="InterPro" id="IPR001387">
    <property type="entry name" value="Cro/C1-type_HTH"/>
</dbReference>
<dbReference type="InterPro" id="IPR010982">
    <property type="entry name" value="Lambda_DNA-bd_dom_sf"/>
</dbReference>
<dbReference type="InterPro" id="IPR013729">
    <property type="entry name" value="MBF1_N"/>
</dbReference>
<dbReference type="PANTHER" id="PTHR10245:SF15">
    <property type="entry name" value="ENDOTHELIAL DIFFERENTIATION-RELATED FACTOR 1"/>
    <property type="match status" value="1"/>
</dbReference>
<dbReference type="PANTHER" id="PTHR10245">
    <property type="entry name" value="ENDOTHELIAL DIFFERENTIATION-RELATED FACTOR 1 MULTIPROTEIN BRIDGING FACTOR 1"/>
    <property type="match status" value="1"/>
</dbReference>
<dbReference type="Pfam" id="PF01381">
    <property type="entry name" value="HTH_3"/>
    <property type="match status" value="1"/>
</dbReference>
<dbReference type="Pfam" id="PF08523">
    <property type="entry name" value="MBF1"/>
    <property type="match status" value="1"/>
</dbReference>
<dbReference type="SMART" id="SM00530">
    <property type="entry name" value="HTH_XRE"/>
    <property type="match status" value="1"/>
</dbReference>
<dbReference type="SUPFAM" id="SSF47413">
    <property type="entry name" value="lambda repressor-like DNA-binding domains"/>
    <property type="match status" value="1"/>
</dbReference>
<dbReference type="PROSITE" id="PS50943">
    <property type="entry name" value="HTH_CROC1"/>
    <property type="match status" value="1"/>
</dbReference>
<gene>
    <name type="primary">edf1</name>
    <name type="ORF">zgc:73192</name>
    <name type="ORF">zgc:86829</name>
</gene>
<comment type="function">
    <text evidence="1">Probable transcriptional coactivator.</text>
</comment>
<comment type="subcellular location">
    <subcellularLocation>
        <location evidence="1">Nucleus</location>
    </subcellularLocation>
</comment>
<accession>Q6PBY3</accession>
<sequence length="146" mass="16075">MAECDWDTVTVLRKKGSAAQSKSKQAVTAAQRKGEAVETSKKWAAGQNKQHVVTKNTAKLDRETEELSHQRVPLEVGKVIQQGRQNKGLTQKDLATKINEKPQIIAEYECGKAIPNNQVMGKIERAIGLKLRGKDIGLPLEACSKK</sequence>
<proteinExistence type="evidence at transcript level"/>
<organism>
    <name type="scientific">Danio rerio</name>
    <name type="common">Zebrafish</name>
    <name type="synonym">Brachydanio rerio</name>
    <dbReference type="NCBI Taxonomy" id="7955"/>
    <lineage>
        <taxon>Eukaryota</taxon>
        <taxon>Metazoa</taxon>
        <taxon>Chordata</taxon>
        <taxon>Craniata</taxon>
        <taxon>Vertebrata</taxon>
        <taxon>Euteleostomi</taxon>
        <taxon>Actinopterygii</taxon>
        <taxon>Neopterygii</taxon>
        <taxon>Teleostei</taxon>
        <taxon>Ostariophysi</taxon>
        <taxon>Cypriniformes</taxon>
        <taxon>Danionidae</taxon>
        <taxon>Danioninae</taxon>
        <taxon>Danio</taxon>
    </lineage>
</organism>
<feature type="chain" id="PRO_0000149799" description="Endothelial differentiation-related factor 1 homolog">
    <location>
        <begin position="1"/>
        <end position="146"/>
    </location>
</feature>
<feature type="domain" description="HTH cro/C1-type" evidence="2">
    <location>
        <begin position="80"/>
        <end position="134"/>
    </location>
</feature>
<feature type="DNA-binding region" description="H-T-H motif" evidence="2">
    <location>
        <begin position="91"/>
        <end position="110"/>
    </location>
</feature>
<feature type="region of interest" description="Disordered" evidence="3">
    <location>
        <begin position="13"/>
        <end position="53"/>
    </location>
</feature>
<feature type="compositionally biased region" description="Low complexity" evidence="3">
    <location>
        <begin position="17"/>
        <end position="31"/>
    </location>
</feature>
<feature type="compositionally biased region" description="Basic and acidic residues" evidence="3">
    <location>
        <begin position="32"/>
        <end position="41"/>
    </location>
</feature>
<protein>
    <recommendedName>
        <fullName>Endothelial differentiation-related factor 1 homolog</fullName>
        <shortName>EDF-1</shortName>
    </recommendedName>
</protein>
<reference key="1">
    <citation type="submission" date="2003-10" db="EMBL/GenBank/DDBJ databases">
        <authorList>
            <consortium name="NIH - Zebrafish Gene Collection (ZGC) project"/>
        </authorList>
    </citation>
    <scope>NUCLEOTIDE SEQUENCE [LARGE SCALE MRNA]</scope>
    <source>
        <tissue>Embryo</tissue>
        <tissue>Eye</tissue>
    </source>
</reference>
<name>EDF1_DANRE</name>